<name>RSMA_BURP1</name>
<accession>Q3JVW6</accession>
<evidence type="ECO:0000255" key="1">
    <source>
        <dbReference type="HAMAP-Rule" id="MF_00607"/>
    </source>
</evidence>
<protein>
    <recommendedName>
        <fullName evidence="1">Ribosomal RNA small subunit methyltransferase A</fullName>
        <ecNumber evidence="1">2.1.1.182</ecNumber>
    </recommendedName>
    <alternativeName>
        <fullName evidence="1">16S rRNA (adenine(1518)-N(6)/adenine(1519)-N(6))-dimethyltransferase</fullName>
    </alternativeName>
    <alternativeName>
        <fullName evidence="1">16S rRNA dimethyladenosine transferase</fullName>
    </alternativeName>
    <alternativeName>
        <fullName evidence="1">16S rRNA dimethylase</fullName>
    </alternativeName>
    <alternativeName>
        <fullName evidence="1">S-adenosylmethionine-6-N', N'-adenosyl(rRNA) dimethyltransferase</fullName>
    </alternativeName>
</protein>
<feature type="chain" id="PRO_0000271908" description="Ribosomal RNA small subunit methyltransferase A">
    <location>
        <begin position="1"/>
        <end position="275"/>
    </location>
</feature>
<feature type="binding site" evidence="1">
    <location>
        <position position="19"/>
    </location>
    <ligand>
        <name>S-adenosyl-L-methionine</name>
        <dbReference type="ChEBI" id="CHEBI:59789"/>
    </ligand>
</feature>
<feature type="binding site" evidence="1">
    <location>
        <position position="21"/>
    </location>
    <ligand>
        <name>S-adenosyl-L-methionine</name>
        <dbReference type="ChEBI" id="CHEBI:59789"/>
    </ligand>
</feature>
<feature type="binding site" evidence="1">
    <location>
        <position position="46"/>
    </location>
    <ligand>
        <name>S-adenosyl-L-methionine</name>
        <dbReference type="ChEBI" id="CHEBI:59789"/>
    </ligand>
</feature>
<feature type="binding site" evidence="1">
    <location>
        <position position="71"/>
    </location>
    <ligand>
        <name>S-adenosyl-L-methionine</name>
        <dbReference type="ChEBI" id="CHEBI:59789"/>
    </ligand>
</feature>
<feature type="binding site" evidence="1">
    <location>
        <position position="94"/>
    </location>
    <ligand>
        <name>S-adenosyl-L-methionine</name>
        <dbReference type="ChEBI" id="CHEBI:59789"/>
    </ligand>
</feature>
<feature type="binding site" evidence="1">
    <location>
        <position position="117"/>
    </location>
    <ligand>
        <name>S-adenosyl-L-methionine</name>
        <dbReference type="ChEBI" id="CHEBI:59789"/>
    </ligand>
</feature>
<reference key="1">
    <citation type="journal article" date="2010" name="Genome Biol. Evol.">
        <title>Continuing evolution of Burkholderia mallei through genome reduction and large-scale rearrangements.</title>
        <authorList>
            <person name="Losada L."/>
            <person name="Ronning C.M."/>
            <person name="DeShazer D."/>
            <person name="Woods D."/>
            <person name="Fedorova N."/>
            <person name="Kim H.S."/>
            <person name="Shabalina S.A."/>
            <person name="Pearson T.R."/>
            <person name="Brinkac L."/>
            <person name="Tan P."/>
            <person name="Nandi T."/>
            <person name="Crabtree J."/>
            <person name="Badger J."/>
            <person name="Beckstrom-Sternberg S."/>
            <person name="Saqib M."/>
            <person name="Schutzer S.E."/>
            <person name="Keim P."/>
            <person name="Nierman W.C."/>
        </authorList>
    </citation>
    <scope>NUCLEOTIDE SEQUENCE [LARGE SCALE GENOMIC DNA]</scope>
    <source>
        <strain>1710b</strain>
    </source>
</reference>
<comment type="function">
    <text evidence="1">Specifically dimethylates two adjacent adenosines (A1518 and A1519) in the loop of a conserved hairpin near the 3'-end of 16S rRNA in the 30S particle. May play a critical role in biogenesis of 30S subunits.</text>
</comment>
<comment type="catalytic activity">
    <reaction evidence="1">
        <text>adenosine(1518)/adenosine(1519) in 16S rRNA + 4 S-adenosyl-L-methionine = N(6)-dimethyladenosine(1518)/N(6)-dimethyladenosine(1519) in 16S rRNA + 4 S-adenosyl-L-homocysteine + 4 H(+)</text>
        <dbReference type="Rhea" id="RHEA:19609"/>
        <dbReference type="Rhea" id="RHEA-COMP:10232"/>
        <dbReference type="Rhea" id="RHEA-COMP:10233"/>
        <dbReference type="ChEBI" id="CHEBI:15378"/>
        <dbReference type="ChEBI" id="CHEBI:57856"/>
        <dbReference type="ChEBI" id="CHEBI:59789"/>
        <dbReference type="ChEBI" id="CHEBI:74411"/>
        <dbReference type="ChEBI" id="CHEBI:74493"/>
        <dbReference type="EC" id="2.1.1.182"/>
    </reaction>
</comment>
<comment type="subcellular location">
    <subcellularLocation>
        <location evidence="1">Cytoplasm</location>
    </subcellularLocation>
</comment>
<comment type="similarity">
    <text evidence="1">Belongs to the class I-like SAM-binding methyltransferase superfamily. rRNA adenine N(6)-methyltransferase family. RsmA subfamily.</text>
</comment>
<gene>
    <name evidence="1" type="primary">rsmA</name>
    <name evidence="1" type="synonym">ksgA</name>
    <name type="ordered locus">BURPS1710b_0874</name>
</gene>
<keyword id="KW-0963">Cytoplasm</keyword>
<keyword id="KW-0489">Methyltransferase</keyword>
<keyword id="KW-0694">RNA-binding</keyword>
<keyword id="KW-0698">rRNA processing</keyword>
<keyword id="KW-0949">S-adenosyl-L-methionine</keyword>
<keyword id="KW-0808">Transferase</keyword>
<proteinExistence type="inferred from homology"/>
<sequence length="275" mass="30247">MSNSRQHQGHFARKRFGQNFLVDHGVIDAIVAAIRPERGERMVEIGPGLGALTGPVIARLATPGSPLHAVELDRDLIGRLEQRFGELLELHAGDALTFDFGSIARPGDEPSLRIIGNLPYNISSPLLFHLMSFAPVVIDQHFMLQNEVVERMVAEPGTKAFSRLSVMLQYRYVMDKLIDVPPESFQPPPKVDSAIVRMIPHAPHELPAVDPAVLGEVVTAAFSQRRKMLRNTLGGYRDLVDFDALGFDLARRAEDIGVDEYVRVAQAVASARASG</sequence>
<dbReference type="EC" id="2.1.1.182" evidence="1"/>
<dbReference type="EMBL" id="CP000124">
    <property type="protein sequence ID" value="ABA48421.1"/>
    <property type="molecule type" value="Genomic_DNA"/>
</dbReference>
<dbReference type="RefSeq" id="WP_004189099.1">
    <property type="nucleotide sequence ID" value="NC_007434.1"/>
</dbReference>
<dbReference type="SMR" id="Q3JVW6"/>
<dbReference type="EnsemblBacteria" id="ABA48421">
    <property type="protein sequence ID" value="ABA48421"/>
    <property type="gene ID" value="BURPS1710b_0874"/>
</dbReference>
<dbReference type="GeneID" id="92977989"/>
<dbReference type="KEGG" id="bpm:BURPS1710b_0874"/>
<dbReference type="HOGENOM" id="CLU_041220_0_1_4"/>
<dbReference type="Proteomes" id="UP000002700">
    <property type="component" value="Chromosome I"/>
</dbReference>
<dbReference type="GO" id="GO:0005829">
    <property type="term" value="C:cytosol"/>
    <property type="evidence" value="ECO:0007669"/>
    <property type="project" value="TreeGrafter"/>
</dbReference>
<dbReference type="GO" id="GO:0052908">
    <property type="term" value="F:16S rRNA (adenine(1518)-N(6)/adenine(1519)-N(6))-dimethyltransferase activity"/>
    <property type="evidence" value="ECO:0007669"/>
    <property type="project" value="UniProtKB-EC"/>
</dbReference>
<dbReference type="GO" id="GO:0003723">
    <property type="term" value="F:RNA binding"/>
    <property type="evidence" value="ECO:0007669"/>
    <property type="project" value="UniProtKB-KW"/>
</dbReference>
<dbReference type="FunFam" id="1.10.8.100:FF:000001">
    <property type="entry name" value="Ribosomal RNA small subunit methyltransferase A"/>
    <property type="match status" value="1"/>
</dbReference>
<dbReference type="Gene3D" id="1.10.8.100">
    <property type="entry name" value="Ribosomal RNA adenine dimethylase-like, domain 2"/>
    <property type="match status" value="1"/>
</dbReference>
<dbReference type="Gene3D" id="3.40.50.150">
    <property type="entry name" value="Vaccinia Virus protein VP39"/>
    <property type="match status" value="1"/>
</dbReference>
<dbReference type="HAMAP" id="MF_00607">
    <property type="entry name" value="16SrRNA_methyltr_A"/>
    <property type="match status" value="1"/>
</dbReference>
<dbReference type="InterPro" id="IPR001737">
    <property type="entry name" value="KsgA/Erm"/>
</dbReference>
<dbReference type="InterPro" id="IPR023165">
    <property type="entry name" value="rRNA_Ade_diMease-like_C"/>
</dbReference>
<dbReference type="InterPro" id="IPR020598">
    <property type="entry name" value="rRNA_Ade_methylase_Trfase_N"/>
</dbReference>
<dbReference type="InterPro" id="IPR011530">
    <property type="entry name" value="rRNA_adenine_dimethylase"/>
</dbReference>
<dbReference type="InterPro" id="IPR029063">
    <property type="entry name" value="SAM-dependent_MTases_sf"/>
</dbReference>
<dbReference type="NCBIfam" id="TIGR00755">
    <property type="entry name" value="ksgA"/>
    <property type="match status" value="1"/>
</dbReference>
<dbReference type="PANTHER" id="PTHR11727">
    <property type="entry name" value="DIMETHYLADENOSINE TRANSFERASE"/>
    <property type="match status" value="1"/>
</dbReference>
<dbReference type="PANTHER" id="PTHR11727:SF7">
    <property type="entry name" value="DIMETHYLADENOSINE TRANSFERASE-RELATED"/>
    <property type="match status" value="1"/>
</dbReference>
<dbReference type="Pfam" id="PF00398">
    <property type="entry name" value="RrnaAD"/>
    <property type="match status" value="1"/>
</dbReference>
<dbReference type="SMART" id="SM00650">
    <property type="entry name" value="rADc"/>
    <property type="match status" value="1"/>
</dbReference>
<dbReference type="SUPFAM" id="SSF53335">
    <property type="entry name" value="S-adenosyl-L-methionine-dependent methyltransferases"/>
    <property type="match status" value="1"/>
</dbReference>
<dbReference type="PROSITE" id="PS51689">
    <property type="entry name" value="SAM_RNA_A_N6_MT"/>
    <property type="match status" value="1"/>
</dbReference>
<organism>
    <name type="scientific">Burkholderia pseudomallei (strain 1710b)</name>
    <dbReference type="NCBI Taxonomy" id="320372"/>
    <lineage>
        <taxon>Bacteria</taxon>
        <taxon>Pseudomonadati</taxon>
        <taxon>Pseudomonadota</taxon>
        <taxon>Betaproteobacteria</taxon>
        <taxon>Burkholderiales</taxon>
        <taxon>Burkholderiaceae</taxon>
        <taxon>Burkholderia</taxon>
        <taxon>pseudomallei group</taxon>
    </lineage>
</organism>